<evidence type="ECO:0000255" key="1">
    <source>
        <dbReference type="HAMAP-Rule" id="MF_00465"/>
    </source>
</evidence>
<gene>
    <name evidence="1" type="primary">speD</name>
    <name type="ordered locus">SG0168</name>
</gene>
<organism>
    <name type="scientific">Salmonella gallinarum (strain 287/91 / NCTC 13346)</name>
    <dbReference type="NCBI Taxonomy" id="550538"/>
    <lineage>
        <taxon>Bacteria</taxon>
        <taxon>Pseudomonadati</taxon>
        <taxon>Pseudomonadota</taxon>
        <taxon>Gammaproteobacteria</taxon>
        <taxon>Enterobacterales</taxon>
        <taxon>Enterobacteriaceae</taxon>
        <taxon>Salmonella</taxon>
    </lineage>
</organism>
<reference key="1">
    <citation type="journal article" date="2008" name="Genome Res.">
        <title>Comparative genome analysis of Salmonella enteritidis PT4 and Salmonella gallinarum 287/91 provides insights into evolutionary and host adaptation pathways.</title>
        <authorList>
            <person name="Thomson N.R."/>
            <person name="Clayton D.J."/>
            <person name="Windhorst D."/>
            <person name="Vernikos G."/>
            <person name="Davidson S."/>
            <person name="Churcher C."/>
            <person name="Quail M.A."/>
            <person name="Stevens M."/>
            <person name="Jones M.A."/>
            <person name="Watson M."/>
            <person name="Barron A."/>
            <person name="Layton A."/>
            <person name="Pickard D."/>
            <person name="Kingsley R.A."/>
            <person name="Bignell A."/>
            <person name="Clark L."/>
            <person name="Harris B."/>
            <person name="Ormond D."/>
            <person name="Abdellah Z."/>
            <person name="Brooks K."/>
            <person name="Cherevach I."/>
            <person name="Chillingworth T."/>
            <person name="Woodward J."/>
            <person name="Norberczak H."/>
            <person name="Lord A."/>
            <person name="Arrowsmith C."/>
            <person name="Jagels K."/>
            <person name="Moule S."/>
            <person name="Mungall K."/>
            <person name="Saunders M."/>
            <person name="Whitehead S."/>
            <person name="Chabalgoity J.A."/>
            <person name="Maskell D."/>
            <person name="Humphreys T."/>
            <person name="Roberts M."/>
            <person name="Barrow P.A."/>
            <person name="Dougan G."/>
            <person name="Parkhill J."/>
        </authorList>
    </citation>
    <scope>NUCLEOTIDE SEQUENCE [LARGE SCALE GENOMIC DNA]</scope>
    <source>
        <strain>287/91 / NCTC 13346</strain>
    </source>
</reference>
<feature type="chain" id="PRO_0000364403" description="S-adenosylmethionine decarboxylase beta chain" evidence="1">
    <location>
        <begin position="1"/>
        <end position="111"/>
    </location>
</feature>
<feature type="chain" id="PRO_0000364404" description="S-adenosylmethionine decarboxylase alpha chain" evidence="1">
    <location>
        <begin position="112"/>
        <end position="264"/>
    </location>
</feature>
<feature type="active site" description="Schiff-base intermediate with substrate; via pyruvic acid" evidence="1">
    <location>
        <position position="112"/>
    </location>
</feature>
<feature type="active site" description="Proton acceptor; for processing activity" evidence="1">
    <location>
        <position position="117"/>
    </location>
</feature>
<feature type="active site" description="Proton donor; for catalytic activity" evidence="1">
    <location>
        <position position="140"/>
    </location>
</feature>
<feature type="site" description="Cleavage (non-hydrolytic); by autolysis" evidence="1">
    <location>
        <begin position="111"/>
        <end position="112"/>
    </location>
</feature>
<feature type="modified residue" description="Pyruvic acid (Ser); by autocatalysis" evidence="1">
    <location>
        <position position="112"/>
    </location>
</feature>
<name>SPED_SALG2</name>
<keyword id="KW-0068">Autocatalytic cleavage</keyword>
<keyword id="KW-0210">Decarboxylase</keyword>
<keyword id="KW-0456">Lyase</keyword>
<keyword id="KW-0620">Polyamine biosynthesis</keyword>
<keyword id="KW-0670">Pyruvate</keyword>
<keyword id="KW-0949">S-adenosyl-L-methionine</keyword>
<keyword id="KW-0704">Schiff base</keyword>
<keyword id="KW-0745">Spermidine biosynthesis</keyword>
<keyword id="KW-0865">Zymogen</keyword>
<sequence length="264" mass="30401">MKKLKLHGFNNLTKSLSFCIYDICYAKTAEERDGYIAYIDELYNANRLTEILSETCSIIGANILNIARQDYEPQGASVTILVSEEPVDPKLIDQTEHPGPLPETVVAHLDKSHICVHTYPESHPEGGLCTFRADIEVSTCGVISPLKALNYLIHQLESDIVTIDYRVRGFTRDVNGMKHFIDHEINSIQNFMSEDMKSLYDMVDVNVYQENIFHTKMLLKEFDLKHYMFHTKPEDLTETERQEITAALWKEMREIYYGRNISAV</sequence>
<dbReference type="EC" id="4.1.1.50" evidence="1"/>
<dbReference type="EMBL" id="AM933173">
    <property type="protein sequence ID" value="CAR36076.1"/>
    <property type="molecule type" value="Genomic_DNA"/>
</dbReference>
<dbReference type="RefSeq" id="WP_000734293.1">
    <property type="nucleotide sequence ID" value="NC_011274.1"/>
</dbReference>
<dbReference type="KEGG" id="seg:SG0168"/>
<dbReference type="HOGENOM" id="CLU_092007_0_0_6"/>
<dbReference type="UniPathway" id="UPA00331">
    <property type="reaction ID" value="UER00451"/>
</dbReference>
<dbReference type="Proteomes" id="UP000008321">
    <property type="component" value="Chromosome"/>
</dbReference>
<dbReference type="GO" id="GO:0005829">
    <property type="term" value="C:cytosol"/>
    <property type="evidence" value="ECO:0007669"/>
    <property type="project" value="TreeGrafter"/>
</dbReference>
<dbReference type="GO" id="GO:0004014">
    <property type="term" value="F:adenosylmethionine decarboxylase activity"/>
    <property type="evidence" value="ECO:0007669"/>
    <property type="project" value="UniProtKB-UniRule"/>
</dbReference>
<dbReference type="GO" id="GO:0008295">
    <property type="term" value="P:spermidine biosynthetic process"/>
    <property type="evidence" value="ECO:0007669"/>
    <property type="project" value="UniProtKB-UniRule"/>
</dbReference>
<dbReference type="FunFam" id="3.60.90.10:FF:000001">
    <property type="entry name" value="S-adenosylmethionine decarboxylase proenzyme"/>
    <property type="match status" value="1"/>
</dbReference>
<dbReference type="Gene3D" id="3.60.90.10">
    <property type="entry name" value="S-adenosylmethionine decarboxylase"/>
    <property type="match status" value="1"/>
</dbReference>
<dbReference type="HAMAP" id="MF_00465">
    <property type="entry name" value="AdoMetDC_2"/>
    <property type="match status" value="1"/>
</dbReference>
<dbReference type="InterPro" id="IPR003826">
    <property type="entry name" value="AdoMetDC_fam_prok"/>
</dbReference>
<dbReference type="InterPro" id="IPR009165">
    <property type="entry name" value="S-AdoMet_deCO2ase_bac"/>
</dbReference>
<dbReference type="InterPro" id="IPR016067">
    <property type="entry name" value="S-AdoMet_deCO2ase_core"/>
</dbReference>
<dbReference type="NCBIfam" id="TIGR03331">
    <property type="entry name" value="SAM_DCase_Eco"/>
    <property type="match status" value="1"/>
</dbReference>
<dbReference type="PANTHER" id="PTHR33866">
    <property type="entry name" value="S-ADENOSYLMETHIONINE DECARBOXYLASE PROENZYME"/>
    <property type="match status" value="1"/>
</dbReference>
<dbReference type="PANTHER" id="PTHR33866:SF1">
    <property type="entry name" value="S-ADENOSYLMETHIONINE DECARBOXYLASE PROENZYME"/>
    <property type="match status" value="1"/>
</dbReference>
<dbReference type="Pfam" id="PF02675">
    <property type="entry name" value="AdoMet_dc"/>
    <property type="match status" value="1"/>
</dbReference>
<dbReference type="PIRSF" id="PIRSF001356">
    <property type="entry name" value="SAM_decarboxylas"/>
    <property type="match status" value="1"/>
</dbReference>
<dbReference type="SUPFAM" id="SSF56276">
    <property type="entry name" value="S-adenosylmethionine decarboxylase"/>
    <property type="match status" value="1"/>
</dbReference>
<accession>B5RHA4</accession>
<protein>
    <recommendedName>
        <fullName evidence="1">S-adenosylmethionine decarboxylase proenzyme</fullName>
        <shortName evidence="1">AdoMetDC</shortName>
        <shortName evidence="1">SAMDC</shortName>
        <ecNumber evidence="1">4.1.1.50</ecNumber>
    </recommendedName>
    <component>
        <recommendedName>
            <fullName evidence="1">S-adenosylmethionine decarboxylase beta chain</fullName>
        </recommendedName>
    </component>
    <component>
        <recommendedName>
            <fullName evidence="1">S-adenosylmethionine decarboxylase alpha chain</fullName>
        </recommendedName>
    </component>
</protein>
<comment type="function">
    <text evidence="1">Catalyzes the decarboxylation of S-adenosylmethionine to S-adenosylmethioninamine (dcAdoMet), the propylamine donor required for the synthesis of the polyamines spermine and spermidine from the diamine putrescine.</text>
</comment>
<comment type="catalytic activity">
    <reaction evidence="1">
        <text>S-adenosyl-L-methionine + H(+) = S-adenosyl 3-(methylsulfanyl)propylamine + CO2</text>
        <dbReference type="Rhea" id="RHEA:15981"/>
        <dbReference type="ChEBI" id="CHEBI:15378"/>
        <dbReference type="ChEBI" id="CHEBI:16526"/>
        <dbReference type="ChEBI" id="CHEBI:57443"/>
        <dbReference type="ChEBI" id="CHEBI:59789"/>
        <dbReference type="EC" id="4.1.1.50"/>
    </reaction>
</comment>
<comment type="cofactor">
    <cofactor evidence="1">
        <name>pyruvate</name>
        <dbReference type="ChEBI" id="CHEBI:15361"/>
    </cofactor>
    <text evidence="1">Binds 1 pyruvoyl group covalently per subunit.</text>
</comment>
<comment type="pathway">
    <text evidence="1">Amine and polyamine biosynthesis; S-adenosylmethioninamine biosynthesis; S-adenosylmethioninamine from S-adenosyl-L-methionine: step 1/1.</text>
</comment>
<comment type="subunit">
    <text evidence="1">Heterooctamer of four alpha and four beta chains arranged as a tetramer of alpha/beta heterodimers.</text>
</comment>
<comment type="PTM">
    <text evidence="1">Is synthesized initially as an inactive proenzyme. Formation of the active enzyme involves a self-maturation process in which the active site pyruvoyl group is generated from an internal serine residue via an autocatalytic post-translational modification. Two non-identical subunits are generated from the proenzyme in this reaction, and the pyruvate is formed at the N-terminus of the alpha chain, which is derived from the carboxyl end of the proenzyme. The post-translation cleavage follows an unusual pathway, termed non-hydrolytic serinolysis, in which the side chain hydroxyl group of the serine supplies its oxygen atom to form the C-terminus of the beta chain, while the remainder of the serine residue undergoes an oxidative deamination to produce ammonia and the pyruvoyl group blocking the N-terminus of the alpha chain.</text>
</comment>
<comment type="similarity">
    <text evidence="1">Belongs to the prokaryotic AdoMetDC family. Type 2 subfamily.</text>
</comment>
<proteinExistence type="inferred from homology"/>